<evidence type="ECO:0000255" key="1">
    <source>
        <dbReference type="HAMAP-Rule" id="MF_00291"/>
    </source>
</evidence>
<evidence type="ECO:0000305" key="2"/>
<keyword id="KW-1185">Reference proteome</keyword>
<keyword id="KW-0687">Ribonucleoprotein</keyword>
<keyword id="KW-0689">Ribosomal protein</keyword>
<reference key="1">
    <citation type="journal article" date="2004" name="PLoS Biol.">
        <title>Genomic insights into methanotrophy: the complete genome sequence of Methylococcus capsulatus (Bath).</title>
        <authorList>
            <person name="Ward N.L."/>
            <person name="Larsen O."/>
            <person name="Sakwa J."/>
            <person name="Bruseth L."/>
            <person name="Khouri H.M."/>
            <person name="Durkin A.S."/>
            <person name="Dimitrov G."/>
            <person name="Jiang L."/>
            <person name="Scanlan D."/>
            <person name="Kang K.H."/>
            <person name="Lewis M.R."/>
            <person name="Nelson K.E."/>
            <person name="Methe B.A."/>
            <person name="Wu M."/>
            <person name="Heidelberg J.F."/>
            <person name="Paulsen I.T."/>
            <person name="Fouts D.E."/>
            <person name="Ravel J."/>
            <person name="Tettelin H."/>
            <person name="Ren Q."/>
            <person name="Read T.D."/>
            <person name="DeBoy R.T."/>
            <person name="Seshadri R."/>
            <person name="Salzberg S.L."/>
            <person name="Jensen H.B."/>
            <person name="Birkeland N.K."/>
            <person name="Nelson W.C."/>
            <person name="Dodson R.J."/>
            <person name="Grindhaug S.H."/>
            <person name="Holt I.E."/>
            <person name="Eidhammer I."/>
            <person name="Jonasen I."/>
            <person name="Vanaken S."/>
            <person name="Utterback T.R."/>
            <person name="Feldblyum T.V."/>
            <person name="Fraser C.M."/>
            <person name="Lillehaug J.R."/>
            <person name="Eisen J.A."/>
        </authorList>
    </citation>
    <scope>NUCLEOTIDE SEQUENCE [LARGE SCALE GENOMIC DNA]</scope>
    <source>
        <strain>ATCC 33009 / NCIMB 11132 / Bath</strain>
    </source>
</reference>
<protein>
    <recommendedName>
        <fullName evidence="1">Small ribosomal subunit protein uS2</fullName>
    </recommendedName>
    <alternativeName>
        <fullName evidence="2">30S ribosomal protein S2</fullName>
    </alternativeName>
</protein>
<organism>
    <name type="scientific">Methylococcus capsulatus (strain ATCC 33009 / NCIMB 11132 / Bath)</name>
    <dbReference type="NCBI Taxonomy" id="243233"/>
    <lineage>
        <taxon>Bacteria</taxon>
        <taxon>Pseudomonadati</taxon>
        <taxon>Pseudomonadota</taxon>
        <taxon>Gammaproteobacteria</taxon>
        <taxon>Methylococcales</taxon>
        <taxon>Methylococcaceae</taxon>
        <taxon>Methylococcus</taxon>
    </lineage>
</organism>
<proteinExistence type="inferred from homology"/>
<accession>Q60BB0</accession>
<gene>
    <name evidence="1" type="primary">rpsB</name>
    <name type="ordered locus">MCA0567</name>
</gene>
<dbReference type="EMBL" id="AE017282">
    <property type="protein sequence ID" value="AAU93243.1"/>
    <property type="molecule type" value="Genomic_DNA"/>
</dbReference>
<dbReference type="RefSeq" id="WP_010959915.1">
    <property type="nucleotide sequence ID" value="NC_002977.6"/>
</dbReference>
<dbReference type="SMR" id="Q60BB0"/>
<dbReference type="STRING" id="243233.MCA0567"/>
<dbReference type="GeneID" id="88222899"/>
<dbReference type="KEGG" id="mca:MCA0567"/>
<dbReference type="eggNOG" id="COG0052">
    <property type="taxonomic scope" value="Bacteria"/>
</dbReference>
<dbReference type="HOGENOM" id="CLU_040318_1_2_6"/>
<dbReference type="Proteomes" id="UP000006821">
    <property type="component" value="Chromosome"/>
</dbReference>
<dbReference type="GO" id="GO:0022627">
    <property type="term" value="C:cytosolic small ribosomal subunit"/>
    <property type="evidence" value="ECO:0007669"/>
    <property type="project" value="TreeGrafter"/>
</dbReference>
<dbReference type="GO" id="GO:0003735">
    <property type="term" value="F:structural constituent of ribosome"/>
    <property type="evidence" value="ECO:0007669"/>
    <property type="project" value="InterPro"/>
</dbReference>
<dbReference type="GO" id="GO:0006412">
    <property type="term" value="P:translation"/>
    <property type="evidence" value="ECO:0007669"/>
    <property type="project" value="UniProtKB-UniRule"/>
</dbReference>
<dbReference type="CDD" id="cd01425">
    <property type="entry name" value="RPS2"/>
    <property type="match status" value="1"/>
</dbReference>
<dbReference type="FunFam" id="1.10.287.610:FF:000001">
    <property type="entry name" value="30S ribosomal protein S2"/>
    <property type="match status" value="1"/>
</dbReference>
<dbReference type="Gene3D" id="3.40.50.10490">
    <property type="entry name" value="Glucose-6-phosphate isomerase like protein, domain 1"/>
    <property type="match status" value="1"/>
</dbReference>
<dbReference type="Gene3D" id="1.10.287.610">
    <property type="entry name" value="Helix hairpin bin"/>
    <property type="match status" value="1"/>
</dbReference>
<dbReference type="HAMAP" id="MF_00291_B">
    <property type="entry name" value="Ribosomal_uS2_B"/>
    <property type="match status" value="1"/>
</dbReference>
<dbReference type="InterPro" id="IPR001865">
    <property type="entry name" value="Ribosomal_uS2"/>
</dbReference>
<dbReference type="InterPro" id="IPR005706">
    <property type="entry name" value="Ribosomal_uS2_bac/mit/plastid"/>
</dbReference>
<dbReference type="InterPro" id="IPR018130">
    <property type="entry name" value="Ribosomal_uS2_CS"/>
</dbReference>
<dbReference type="InterPro" id="IPR023591">
    <property type="entry name" value="Ribosomal_uS2_flav_dom_sf"/>
</dbReference>
<dbReference type="NCBIfam" id="TIGR01011">
    <property type="entry name" value="rpsB_bact"/>
    <property type="match status" value="1"/>
</dbReference>
<dbReference type="PANTHER" id="PTHR12534">
    <property type="entry name" value="30S RIBOSOMAL PROTEIN S2 PROKARYOTIC AND ORGANELLAR"/>
    <property type="match status" value="1"/>
</dbReference>
<dbReference type="PANTHER" id="PTHR12534:SF0">
    <property type="entry name" value="SMALL RIBOSOMAL SUBUNIT PROTEIN US2M"/>
    <property type="match status" value="1"/>
</dbReference>
<dbReference type="Pfam" id="PF00318">
    <property type="entry name" value="Ribosomal_S2"/>
    <property type="match status" value="1"/>
</dbReference>
<dbReference type="PRINTS" id="PR00395">
    <property type="entry name" value="RIBOSOMALS2"/>
</dbReference>
<dbReference type="SUPFAM" id="SSF52313">
    <property type="entry name" value="Ribosomal protein S2"/>
    <property type="match status" value="1"/>
</dbReference>
<dbReference type="PROSITE" id="PS00962">
    <property type="entry name" value="RIBOSOMAL_S2_1"/>
    <property type="match status" value="1"/>
</dbReference>
<dbReference type="PROSITE" id="PS00963">
    <property type="entry name" value="RIBOSOMAL_S2_2"/>
    <property type="match status" value="1"/>
</dbReference>
<comment type="similarity">
    <text evidence="1">Belongs to the universal ribosomal protein uS2 family.</text>
</comment>
<sequence>MTSVTMRQMLEAGVHFGHQTRYWNPKMAPFIFGARSNIHIINLEKTLPLFNDAMKYLEQVAANRGKILFVGTKKTMRKVIEEEARRCGMPYVNHRWLGGMLTNFKTIKASIARMKDLQAMRDDGRLNRFSKKEALGMMRELEKLVCNVGGIGDMDRLPDVMFIIDTGYEKNAVSEARKLGIPVVGVVDTNNSPVGIDYVIPGNDDSIRAVQLYAQSAATAILRGKASGVDFGAVADEFVEMEPETEQGATGETLGG</sequence>
<feature type="chain" id="PRO_0000134195" description="Small ribosomal subunit protein uS2">
    <location>
        <begin position="1"/>
        <end position="256"/>
    </location>
</feature>
<name>RS2_METCA</name>